<organism>
    <name type="scientific">Escherichia fergusonii (strain ATCC 35469 / DSM 13698 / CCUG 18766 / IAM 14443 / JCM 21226 / LMG 7866 / NBRC 102419 / NCTC 12128 / CDC 0568-73)</name>
    <dbReference type="NCBI Taxonomy" id="585054"/>
    <lineage>
        <taxon>Bacteria</taxon>
        <taxon>Pseudomonadati</taxon>
        <taxon>Pseudomonadota</taxon>
        <taxon>Gammaproteobacteria</taxon>
        <taxon>Enterobacterales</taxon>
        <taxon>Enterobacteriaceae</taxon>
        <taxon>Escherichia</taxon>
    </lineage>
</organism>
<gene>
    <name evidence="1" type="primary">murI</name>
    <name type="ordered locus">EFER_3792</name>
</gene>
<reference key="1">
    <citation type="journal article" date="2009" name="PLoS Genet.">
        <title>Organised genome dynamics in the Escherichia coli species results in highly diverse adaptive paths.</title>
        <authorList>
            <person name="Touchon M."/>
            <person name="Hoede C."/>
            <person name="Tenaillon O."/>
            <person name="Barbe V."/>
            <person name="Baeriswyl S."/>
            <person name="Bidet P."/>
            <person name="Bingen E."/>
            <person name="Bonacorsi S."/>
            <person name="Bouchier C."/>
            <person name="Bouvet O."/>
            <person name="Calteau A."/>
            <person name="Chiapello H."/>
            <person name="Clermont O."/>
            <person name="Cruveiller S."/>
            <person name="Danchin A."/>
            <person name="Diard M."/>
            <person name="Dossat C."/>
            <person name="Karoui M.E."/>
            <person name="Frapy E."/>
            <person name="Garry L."/>
            <person name="Ghigo J.M."/>
            <person name="Gilles A.M."/>
            <person name="Johnson J."/>
            <person name="Le Bouguenec C."/>
            <person name="Lescat M."/>
            <person name="Mangenot S."/>
            <person name="Martinez-Jehanne V."/>
            <person name="Matic I."/>
            <person name="Nassif X."/>
            <person name="Oztas S."/>
            <person name="Petit M.A."/>
            <person name="Pichon C."/>
            <person name="Rouy Z."/>
            <person name="Ruf C.S."/>
            <person name="Schneider D."/>
            <person name="Tourret J."/>
            <person name="Vacherie B."/>
            <person name="Vallenet D."/>
            <person name="Medigue C."/>
            <person name="Rocha E.P.C."/>
            <person name="Denamur E."/>
        </authorList>
    </citation>
    <scope>NUCLEOTIDE SEQUENCE [LARGE SCALE GENOMIC DNA]</scope>
    <source>
        <strain>ATCC 35469 / DSM 13698 / BCRC 15582 / CCUG 18766 / IAM 14443 / JCM 21226 / LMG 7866 / NBRC 102419 / NCTC 12128 / CDC 0568-73</strain>
    </source>
</reference>
<feature type="chain" id="PRO_1000119188" description="Glutamate racemase">
    <location>
        <begin position="1"/>
        <end position="285"/>
    </location>
</feature>
<feature type="active site" description="Proton donor/acceptor" evidence="1">
    <location>
        <position position="92"/>
    </location>
</feature>
<feature type="active site" description="Proton donor/acceptor" evidence="1">
    <location>
        <position position="204"/>
    </location>
</feature>
<feature type="binding site" evidence="1">
    <location>
        <begin position="28"/>
        <end position="29"/>
    </location>
    <ligand>
        <name>substrate</name>
    </ligand>
</feature>
<feature type="binding site" evidence="1">
    <location>
        <begin position="60"/>
        <end position="61"/>
    </location>
    <ligand>
        <name>substrate</name>
    </ligand>
</feature>
<feature type="binding site" evidence="1">
    <location>
        <begin position="93"/>
        <end position="94"/>
    </location>
    <ligand>
        <name>substrate</name>
    </ligand>
</feature>
<feature type="binding site" evidence="1">
    <location>
        <begin position="205"/>
        <end position="206"/>
    </location>
    <ligand>
        <name>substrate</name>
    </ligand>
</feature>
<sequence length="285" mass="31176">MATKLQDGNTPCLAATPSEPRPTVLVFDSGVGGLSVYDEIRHLLPDLHYIYAFDNVAFPYGEKNEDFIVERVVEIVTAVQERYPLALAVVACNTASTVSLPALREKFAFPVVGVVPAIKPAARLTANGIVGLLATRGTVKRSYTHELIARFANECQIEMLGSAEMVELAEAKLHGEDVSLDALKRILRPWLRMKEPPDTVVLGCTHFPLLQEELLQVLPEGTRLVDSGAAIARRTAWLLEHEAPDAKSADANIAFCMDMTPEAEQLLPVLQRYGFKTLEKLAVSG</sequence>
<name>MURI_ESCF3</name>
<dbReference type="EC" id="5.1.1.3" evidence="1"/>
<dbReference type="EMBL" id="CU928158">
    <property type="protein sequence ID" value="CAQ91229.1"/>
    <property type="molecule type" value="Genomic_DNA"/>
</dbReference>
<dbReference type="RefSeq" id="WP_000201816.1">
    <property type="nucleotide sequence ID" value="NC_011740.1"/>
</dbReference>
<dbReference type="SMR" id="B7LUM6"/>
<dbReference type="GeneID" id="75059390"/>
<dbReference type="KEGG" id="efe:EFER_3792"/>
<dbReference type="HOGENOM" id="CLU_052344_2_0_6"/>
<dbReference type="OrthoDB" id="9801055at2"/>
<dbReference type="UniPathway" id="UPA00219"/>
<dbReference type="Proteomes" id="UP000000745">
    <property type="component" value="Chromosome"/>
</dbReference>
<dbReference type="GO" id="GO:0008881">
    <property type="term" value="F:glutamate racemase activity"/>
    <property type="evidence" value="ECO:0007669"/>
    <property type="project" value="UniProtKB-UniRule"/>
</dbReference>
<dbReference type="GO" id="GO:0071555">
    <property type="term" value="P:cell wall organization"/>
    <property type="evidence" value="ECO:0007669"/>
    <property type="project" value="UniProtKB-KW"/>
</dbReference>
<dbReference type="GO" id="GO:0009252">
    <property type="term" value="P:peptidoglycan biosynthetic process"/>
    <property type="evidence" value="ECO:0007669"/>
    <property type="project" value="UniProtKB-UniRule"/>
</dbReference>
<dbReference type="GO" id="GO:0008360">
    <property type="term" value="P:regulation of cell shape"/>
    <property type="evidence" value="ECO:0007669"/>
    <property type="project" value="UniProtKB-KW"/>
</dbReference>
<dbReference type="FunFam" id="3.40.50.1860:FF:000002">
    <property type="entry name" value="Glutamate racemase"/>
    <property type="match status" value="1"/>
</dbReference>
<dbReference type="Gene3D" id="3.40.50.1860">
    <property type="match status" value="2"/>
</dbReference>
<dbReference type="HAMAP" id="MF_00258">
    <property type="entry name" value="Glu_racemase"/>
    <property type="match status" value="1"/>
</dbReference>
<dbReference type="InterPro" id="IPR015942">
    <property type="entry name" value="Asp/Glu/hydantoin_racemase"/>
</dbReference>
<dbReference type="InterPro" id="IPR001920">
    <property type="entry name" value="Asp/Glu_race"/>
</dbReference>
<dbReference type="InterPro" id="IPR018187">
    <property type="entry name" value="Asp/Glu_racemase_AS_1"/>
</dbReference>
<dbReference type="InterPro" id="IPR033134">
    <property type="entry name" value="Asp/Glu_racemase_AS_2"/>
</dbReference>
<dbReference type="InterPro" id="IPR004391">
    <property type="entry name" value="Glu_race"/>
</dbReference>
<dbReference type="NCBIfam" id="TIGR00067">
    <property type="entry name" value="glut_race"/>
    <property type="match status" value="1"/>
</dbReference>
<dbReference type="NCBIfam" id="NF002034">
    <property type="entry name" value="PRK00865.1-1"/>
    <property type="match status" value="1"/>
</dbReference>
<dbReference type="PANTHER" id="PTHR21198">
    <property type="entry name" value="GLUTAMATE RACEMASE"/>
    <property type="match status" value="1"/>
</dbReference>
<dbReference type="PANTHER" id="PTHR21198:SF2">
    <property type="entry name" value="GLUTAMATE RACEMASE"/>
    <property type="match status" value="1"/>
</dbReference>
<dbReference type="Pfam" id="PF01177">
    <property type="entry name" value="Asp_Glu_race"/>
    <property type="match status" value="1"/>
</dbReference>
<dbReference type="SUPFAM" id="SSF53681">
    <property type="entry name" value="Aspartate/glutamate racemase"/>
    <property type="match status" value="2"/>
</dbReference>
<dbReference type="PROSITE" id="PS00923">
    <property type="entry name" value="ASP_GLU_RACEMASE_1"/>
    <property type="match status" value="1"/>
</dbReference>
<dbReference type="PROSITE" id="PS00924">
    <property type="entry name" value="ASP_GLU_RACEMASE_2"/>
    <property type="match status" value="1"/>
</dbReference>
<keyword id="KW-0133">Cell shape</keyword>
<keyword id="KW-0961">Cell wall biogenesis/degradation</keyword>
<keyword id="KW-0413">Isomerase</keyword>
<keyword id="KW-0573">Peptidoglycan synthesis</keyword>
<evidence type="ECO:0000255" key="1">
    <source>
        <dbReference type="HAMAP-Rule" id="MF_00258"/>
    </source>
</evidence>
<protein>
    <recommendedName>
        <fullName evidence="1">Glutamate racemase</fullName>
        <ecNumber evidence="1">5.1.1.3</ecNumber>
    </recommendedName>
</protein>
<comment type="function">
    <text evidence="1">Provides the (R)-glutamate required for cell wall biosynthesis.</text>
</comment>
<comment type="catalytic activity">
    <reaction evidence="1">
        <text>L-glutamate = D-glutamate</text>
        <dbReference type="Rhea" id="RHEA:12813"/>
        <dbReference type="ChEBI" id="CHEBI:29985"/>
        <dbReference type="ChEBI" id="CHEBI:29986"/>
        <dbReference type="EC" id="5.1.1.3"/>
    </reaction>
</comment>
<comment type="pathway">
    <text evidence="1">Cell wall biogenesis; peptidoglycan biosynthesis.</text>
</comment>
<comment type="similarity">
    <text evidence="1">Belongs to the aspartate/glutamate racemases family.</text>
</comment>
<proteinExistence type="inferred from homology"/>
<accession>B7LUM6</accession>